<keyword id="KW-0131">Cell cycle</keyword>
<keyword id="KW-0132">Cell division</keyword>
<keyword id="KW-0175">Coiled coil</keyword>
<keyword id="KW-0963">Cytoplasm</keyword>
<keyword id="KW-1185">Reference proteome</keyword>
<keyword id="KW-0717">Septation</keyword>
<comment type="function">
    <text evidence="1">Non-essential, abundant cell division factor that is required for proper Z-ring formation. It is recruited early to the divisome by direct interaction with FtsZ, stimulating Z-ring assembly and thereby promoting cell division earlier in the cell cycle. Its recruitment to the Z-ring requires functional FtsA or ZipA.</text>
</comment>
<comment type="subunit">
    <text evidence="1">Homodimer. The ends of the coiled-coil dimer bind to each other, forming polymers. Interacts with FtsZ.</text>
</comment>
<comment type="subcellular location">
    <subcellularLocation>
        <location>Cytoplasm</location>
    </subcellularLocation>
    <text evidence="1">Localizes to the septum at mid-cell, in a FtsZ-like pattern.</text>
</comment>
<comment type="similarity">
    <text evidence="1">Belongs to the ZapB family.</text>
</comment>
<sequence>MSLELFNQLEQKVQNAVETIEMLKMEAEELREENTRLKQERDEWERRLNGLLGKFQEIEDGNGETSQTP</sequence>
<accession>Q1QT72</accession>
<protein>
    <recommendedName>
        <fullName evidence="1">Cell division protein ZapB</fullName>
    </recommendedName>
</protein>
<reference key="1">
    <citation type="journal article" date="2011" name="Stand. Genomic Sci.">
        <title>Complete genome sequence of the halophilic and highly halotolerant Chromohalobacter salexigens type strain (1H11(T)).</title>
        <authorList>
            <person name="Copeland A."/>
            <person name="O'Connor K."/>
            <person name="Lucas S."/>
            <person name="Lapidus A."/>
            <person name="Berry K.W."/>
            <person name="Detter J.C."/>
            <person name="Del Rio T.G."/>
            <person name="Hammon N."/>
            <person name="Dalin E."/>
            <person name="Tice H."/>
            <person name="Pitluck S."/>
            <person name="Bruce D."/>
            <person name="Goodwin L."/>
            <person name="Han C."/>
            <person name="Tapia R."/>
            <person name="Saunders E."/>
            <person name="Schmutz J."/>
            <person name="Brettin T."/>
            <person name="Larimer F."/>
            <person name="Land M."/>
            <person name="Hauser L."/>
            <person name="Vargas C."/>
            <person name="Nieto J.J."/>
            <person name="Kyrpides N.C."/>
            <person name="Ivanova N."/>
            <person name="Goker M."/>
            <person name="Klenk H.P."/>
            <person name="Csonka L.N."/>
            <person name="Woyke T."/>
        </authorList>
    </citation>
    <scope>NUCLEOTIDE SEQUENCE [LARGE SCALE GENOMIC DNA]</scope>
    <source>
        <strain>ATCC BAA-138 / DSM 3043 / CIP 106854 / NCIMB 13768 / 1H11</strain>
    </source>
</reference>
<dbReference type="EMBL" id="CP000285">
    <property type="protein sequence ID" value="ABE60336.1"/>
    <property type="molecule type" value="Genomic_DNA"/>
</dbReference>
<dbReference type="RefSeq" id="WP_011508282.1">
    <property type="nucleotide sequence ID" value="NC_007963.1"/>
</dbReference>
<dbReference type="SMR" id="Q1QT72"/>
<dbReference type="STRING" id="290398.Csal_2991"/>
<dbReference type="GeneID" id="95335680"/>
<dbReference type="KEGG" id="csa:Csal_2991"/>
<dbReference type="eggNOG" id="ENOG5033NAU">
    <property type="taxonomic scope" value="Bacteria"/>
</dbReference>
<dbReference type="HOGENOM" id="CLU_171174_1_1_6"/>
<dbReference type="OrthoDB" id="6554593at2"/>
<dbReference type="Proteomes" id="UP000000239">
    <property type="component" value="Chromosome"/>
</dbReference>
<dbReference type="GO" id="GO:0005737">
    <property type="term" value="C:cytoplasm"/>
    <property type="evidence" value="ECO:0007669"/>
    <property type="project" value="UniProtKB-SubCell"/>
</dbReference>
<dbReference type="GO" id="GO:0000917">
    <property type="term" value="P:division septum assembly"/>
    <property type="evidence" value="ECO:0007669"/>
    <property type="project" value="UniProtKB-KW"/>
</dbReference>
<dbReference type="GO" id="GO:0043093">
    <property type="term" value="P:FtsZ-dependent cytokinesis"/>
    <property type="evidence" value="ECO:0007669"/>
    <property type="project" value="UniProtKB-UniRule"/>
</dbReference>
<dbReference type="Gene3D" id="1.20.5.340">
    <property type="match status" value="1"/>
</dbReference>
<dbReference type="HAMAP" id="MF_01196">
    <property type="entry name" value="ZapB"/>
    <property type="match status" value="1"/>
</dbReference>
<dbReference type="InterPro" id="IPR009252">
    <property type="entry name" value="Cell_div_ZapB"/>
</dbReference>
<dbReference type="Pfam" id="PF06005">
    <property type="entry name" value="ZapB"/>
    <property type="match status" value="1"/>
</dbReference>
<dbReference type="SUPFAM" id="SSF75704">
    <property type="entry name" value="Mitotic arrest deficient-like 1, Mad1"/>
    <property type="match status" value="1"/>
</dbReference>
<organism>
    <name type="scientific">Chromohalobacter salexigens (strain ATCC BAA-138 / DSM 3043 / CIP 106854 / NCIMB 13768 / 1H11)</name>
    <dbReference type="NCBI Taxonomy" id="290398"/>
    <lineage>
        <taxon>Bacteria</taxon>
        <taxon>Pseudomonadati</taxon>
        <taxon>Pseudomonadota</taxon>
        <taxon>Gammaproteobacteria</taxon>
        <taxon>Oceanospirillales</taxon>
        <taxon>Halomonadaceae</taxon>
        <taxon>Chromohalobacter</taxon>
    </lineage>
</organism>
<proteinExistence type="inferred from homology"/>
<gene>
    <name evidence="1" type="primary">zapB</name>
    <name type="ordered locus">Csal_2991</name>
</gene>
<evidence type="ECO:0000255" key="1">
    <source>
        <dbReference type="HAMAP-Rule" id="MF_01196"/>
    </source>
</evidence>
<feature type="chain" id="PRO_0000333894" description="Cell division protein ZapB">
    <location>
        <begin position="1"/>
        <end position="69"/>
    </location>
</feature>
<feature type="coiled-coil region" evidence="1">
    <location>
        <begin position="3"/>
        <end position="60"/>
    </location>
</feature>
<name>ZAPB_CHRSD</name>